<accession>P0AAT9</accession>
<accession>P46129</accession>
<accession>P77654</accession>
<feature type="chain" id="PRO_0000168678" description="Uncharacterized protein YbeL">
    <location>
        <begin position="1"/>
        <end position="160"/>
    </location>
</feature>
<keyword id="KW-1185">Reference proteome</keyword>
<dbReference type="EMBL" id="U82598">
    <property type="protein sequence ID" value="AAB40844.1"/>
    <property type="molecule type" value="Genomic_DNA"/>
</dbReference>
<dbReference type="EMBL" id="U00096">
    <property type="protein sequence ID" value="AAC73744.1"/>
    <property type="molecule type" value="Genomic_DNA"/>
</dbReference>
<dbReference type="EMBL" id="AP009048">
    <property type="protein sequence ID" value="BAA35290.1"/>
    <property type="molecule type" value="Genomic_DNA"/>
</dbReference>
<dbReference type="EMBL" id="X06331">
    <property type="status" value="NOT_ANNOTATED_CDS"/>
    <property type="molecule type" value="Genomic_DNA"/>
</dbReference>
<dbReference type="PIR" id="A64799">
    <property type="entry name" value="A64799"/>
</dbReference>
<dbReference type="RefSeq" id="NP_415176.1">
    <property type="nucleotide sequence ID" value="NC_000913.3"/>
</dbReference>
<dbReference type="RefSeq" id="WP_001044880.1">
    <property type="nucleotide sequence ID" value="NZ_STEB01000031.1"/>
</dbReference>
<dbReference type="BioGRID" id="4261863">
    <property type="interactions" value="27"/>
</dbReference>
<dbReference type="FunCoup" id="P0AAT9">
    <property type="interactions" value="66"/>
</dbReference>
<dbReference type="IntAct" id="P0AAT9">
    <property type="interactions" value="9"/>
</dbReference>
<dbReference type="STRING" id="511145.b0643"/>
<dbReference type="jPOST" id="P0AAT9"/>
<dbReference type="PaxDb" id="511145-b0643"/>
<dbReference type="EnsemblBacteria" id="AAC73744">
    <property type="protein sequence ID" value="AAC73744"/>
    <property type="gene ID" value="b0643"/>
</dbReference>
<dbReference type="GeneID" id="945252"/>
<dbReference type="KEGG" id="ecj:JW0638"/>
<dbReference type="KEGG" id="eco:b0643"/>
<dbReference type="KEGG" id="ecoc:C3026_03215"/>
<dbReference type="PATRIC" id="fig|511145.12.peg.674"/>
<dbReference type="EchoBASE" id="EB2696"/>
<dbReference type="eggNOG" id="COG2888">
    <property type="taxonomic scope" value="Bacteria"/>
</dbReference>
<dbReference type="HOGENOM" id="CLU_101353_1_0_6"/>
<dbReference type="InParanoid" id="P0AAT9"/>
<dbReference type="OMA" id="HHHLAFY"/>
<dbReference type="OrthoDB" id="3174978at2"/>
<dbReference type="PhylomeDB" id="P0AAT9"/>
<dbReference type="BioCyc" id="EcoCyc:EG12851-MONOMER"/>
<dbReference type="PRO" id="PR:P0AAT9"/>
<dbReference type="Proteomes" id="UP000000625">
    <property type="component" value="Chromosome"/>
</dbReference>
<dbReference type="InterPro" id="IPR009912">
    <property type="entry name" value="DUF1451"/>
</dbReference>
<dbReference type="NCBIfam" id="NF008261">
    <property type="entry name" value="PRK11032.1"/>
    <property type="match status" value="1"/>
</dbReference>
<dbReference type="Pfam" id="PF07295">
    <property type="entry name" value="DUF1451"/>
    <property type="match status" value="1"/>
</dbReference>
<name>YBEL_ECOLI</name>
<organism>
    <name type="scientific">Escherichia coli (strain K12)</name>
    <dbReference type="NCBI Taxonomy" id="83333"/>
    <lineage>
        <taxon>Bacteria</taxon>
        <taxon>Pseudomonadati</taxon>
        <taxon>Pseudomonadota</taxon>
        <taxon>Gammaproteobacteria</taxon>
        <taxon>Enterobacterales</taxon>
        <taxon>Enterobacteriaceae</taxon>
        <taxon>Escherichia</taxon>
    </lineage>
</organism>
<sequence>MNKVAQYYRELVASLSERLRNGERDIDALVEQARERVIKTGELTRTEVDELTRAVRRDLEEFAMSYEESLKEESDSVFMRVIKESLWQELADITDKTQLEWREVFQDLNHHGVYHSGEVVGLGNLVCEKCHFHLPIYTPEVLTLCPKCGHDQFQRRPFEP</sequence>
<gene>
    <name type="primary">ybeL</name>
    <name type="ordered locus">b0643</name>
    <name type="ordered locus">JW0638</name>
</gene>
<proteinExistence type="predicted"/>
<protein>
    <recommendedName>
        <fullName>Uncharacterized protein YbeL</fullName>
    </recommendedName>
</protein>
<reference key="1">
    <citation type="journal article" date="1996" name="DNA Res.">
        <title>A 718-kb DNA sequence of the Escherichia coli K-12 genome corresponding to the 12.7-28.0 min region on the linkage map.</title>
        <authorList>
            <person name="Oshima T."/>
            <person name="Aiba H."/>
            <person name="Baba T."/>
            <person name="Fujita K."/>
            <person name="Hayashi K."/>
            <person name="Honjo A."/>
            <person name="Ikemoto K."/>
            <person name="Inada T."/>
            <person name="Itoh T."/>
            <person name="Kajihara M."/>
            <person name="Kanai K."/>
            <person name="Kashimoto K."/>
            <person name="Kimura S."/>
            <person name="Kitagawa M."/>
            <person name="Makino K."/>
            <person name="Masuda S."/>
            <person name="Miki T."/>
            <person name="Mizobuchi K."/>
            <person name="Mori H."/>
            <person name="Motomura K."/>
            <person name="Nakamura Y."/>
            <person name="Nashimoto H."/>
            <person name="Nishio Y."/>
            <person name="Saito N."/>
            <person name="Sampei G."/>
            <person name="Seki Y."/>
            <person name="Tagami H."/>
            <person name="Takemoto K."/>
            <person name="Wada C."/>
            <person name="Yamamoto Y."/>
            <person name="Yano M."/>
            <person name="Horiuchi T."/>
        </authorList>
    </citation>
    <scope>NUCLEOTIDE SEQUENCE [LARGE SCALE GENOMIC DNA]</scope>
    <source>
        <strain>K12 / W3110 / ATCC 27325 / DSM 5911</strain>
    </source>
</reference>
<reference key="2">
    <citation type="submission" date="1997-01" db="EMBL/GenBank/DDBJ databases">
        <title>Sequence of minutes 4-25 of Escherichia coli.</title>
        <authorList>
            <person name="Chung E."/>
            <person name="Allen E."/>
            <person name="Araujo R."/>
            <person name="Aparicio A.M."/>
            <person name="Davis K."/>
            <person name="Duncan M."/>
            <person name="Federspiel N."/>
            <person name="Hyman R."/>
            <person name="Kalman S."/>
            <person name="Komp C."/>
            <person name="Kurdi O."/>
            <person name="Lew H."/>
            <person name="Lin D."/>
            <person name="Namath A."/>
            <person name="Oefner P."/>
            <person name="Roberts D."/>
            <person name="Schramm S."/>
            <person name="Davis R.W."/>
        </authorList>
    </citation>
    <scope>NUCLEOTIDE SEQUENCE [LARGE SCALE GENOMIC DNA]</scope>
    <source>
        <strain>K12 / MG1655 / ATCC 47076</strain>
    </source>
</reference>
<reference key="3">
    <citation type="journal article" date="1997" name="Science">
        <title>The complete genome sequence of Escherichia coli K-12.</title>
        <authorList>
            <person name="Blattner F.R."/>
            <person name="Plunkett G. III"/>
            <person name="Bloch C.A."/>
            <person name="Perna N.T."/>
            <person name="Burland V."/>
            <person name="Riley M."/>
            <person name="Collado-Vides J."/>
            <person name="Glasner J.D."/>
            <person name="Rode C.K."/>
            <person name="Mayhew G.F."/>
            <person name="Gregor J."/>
            <person name="Davis N.W."/>
            <person name="Kirkpatrick H.A."/>
            <person name="Goeden M.A."/>
            <person name="Rose D.J."/>
            <person name="Mau B."/>
            <person name="Shao Y."/>
        </authorList>
    </citation>
    <scope>NUCLEOTIDE SEQUENCE [LARGE SCALE GENOMIC DNA]</scope>
    <source>
        <strain>K12 / MG1655 / ATCC 47076</strain>
    </source>
</reference>
<reference key="4">
    <citation type="journal article" date="2006" name="Mol. Syst. Biol.">
        <title>Highly accurate genome sequences of Escherichia coli K-12 strains MG1655 and W3110.</title>
        <authorList>
            <person name="Hayashi K."/>
            <person name="Morooka N."/>
            <person name="Yamamoto Y."/>
            <person name="Fujita K."/>
            <person name="Isono K."/>
            <person name="Choi S."/>
            <person name="Ohtsubo E."/>
            <person name="Baba T."/>
            <person name="Wanner B.L."/>
            <person name="Mori H."/>
            <person name="Horiuchi T."/>
        </authorList>
    </citation>
    <scope>NUCLEOTIDE SEQUENCE [LARGE SCALE GENOMIC DNA]</scope>
    <source>
        <strain>K12 / W3110 / ATCC 27325 / DSM 5911</strain>
    </source>
</reference>
<reference key="5">
    <citation type="journal article" date="1987" name="Nucleic Acids Res.">
        <title>Molecular cloning and nucleotide sequence of the gene for Escherichia coli leucyl-tRNA synthetase.</title>
        <authorList>
            <person name="Haertlein M."/>
            <person name="Madern D."/>
        </authorList>
    </citation>
    <scope>NUCLEOTIDE SEQUENCE [GENOMIC DNA] OF 1-85</scope>
</reference>
<reference key="6">
    <citation type="journal article" date="1995" name="Nucleic Acids Res.">
        <title>Detection of new genes in a bacterial genome using Markov models for three gene classes.</title>
        <authorList>
            <person name="Borodovsky M."/>
            <person name="McIninch J."/>
            <person name="Koonin E.V."/>
            <person name="Rudd K.E."/>
            <person name="Medigue C."/>
            <person name="Danchin A."/>
        </authorList>
    </citation>
    <scope>IDENTIFICATION</scope>
</reference>